<proteinExistence type="evidence at protein level"/>
<keyword id="KW-0002">3D-structure</keyword>
<keyword id="KW-1185">Reference proteome</keyword>
<keyword id="KW-0687">Ribonucleoprotein</keyword>
<keyword id="KW-0689">Ribosomal protein</keyword>
<accession>Q9HWD4</accession>
<reference key="1">
    <citation type="journal article" date="2000" name="Nature">
        <title>Complete genome sequence of Pseudomonas aeruginosa PAO1, an opportunistic pathogen.</title>
        <authorList>
            <person name="Stover C.K."/>
            <person name="Pham X.-Q.T."/>
            <person name="Erwin A.L."/>
            <person name="Mizoguchi S.D."/>
            <person name="Warrener P."/>
            <person name="Hickey M.J."/>
            <person name="Brinkman F.S.L."/>
            <person name="Hufnagle W.O."/>
            <person name="Kowalik D.J."/>
            <person name="Lagrou M."/>
            <person name="Garber R.L."/>
            <person name="Goltry L."/>
            <person name="Tolentino E."/>
            <person name="Westbrock-Wadman S."/>
            <person name="Yuan Y."/>
            <person name="Brody L.L."/>
            <person name="Coulter S.N."/>
            <person name="Folger K.R."/>
            <person name="Kas A."/>
            <person name="Larbig K."/>
            <person name="Lim R.M."/>
            <person name="Smith K.A."/>
            <person name="Spencer D.H."/>
            <person name="Wong G.K.-S."/>
            <person name="Wu Z."/>
            <person name="Paulsen I.T."/>
            <person name="Reizer J."/>
            <person name="Saier M.H. Jr."/>
            <person name="Hancock R.E.W."/>
            <person name="Lory S."/>
            <person name="Olson M.V."/>
        </authorList>
    </citation>
    <scope>NUCLEOTIDE SEQUENCE [LARGE SCALE GENOMIC DNA]</scope>
    <source>
        <strain>ATCC 15692 / DSM 22644 / CIP 104116 / JCM 14847 / LMG 12228 / 1C / PRS 101 / PAO1</strain>
    </source>
</reference>
<name>RS10_PSEAE</name>
<feature type="chain" id="PRO_0000146578" description="Small ribosomal subunit protein uS10">
    <location>
        <begin position="1"/>
        <end position="103"/>
    </location>
</feature>
<dbReference type="EMBL" id="AE004091">
    <property type="protein sequence ID" value="AAG07652.1"/>
    <property type="molecule type" value="Genomic_DNA"/>
</dbReference>
<dbReference type="PIR" id="B83112">
    <property type="entry name" value="B83112"/>
</dbReference>
<dbReference type="RefSeq" id="NP_252954.1">
    <property type="nucleotide sequence ID" value="NC_002516.2"/>
</dbReference>
<dbReference type="RefSeq" id="WP_003103876.1">
    <property type="nucleotide sequence ID" value="NZ_QZGE01000028.1"/>
</dbReference>
<dbReference type="PDB" id="7UNR">
    <property type="method" value="EM"/>
    <property type="resolution" value="2.90 A"/>
    <property type="chains" value="j=1-103"/>
</dbReference>
<dbReference type="PDB" id="7UNU">
    <property type="method" value="EM"/>
    <property type="resolution" value="2.90 A"/>
    <property type="chains" value="j=1-103"/>
</dbReference>
<dbReference type="PDB" id="7UNV">
    <property type="method" value="EM"/>
    <property type="resolution" value="2.70 A"/>
    <property type="chains" value="j=1-103"/>
</dbReference>
<dbReference type="PDB" id="7UNW">
    <property type="method" value="EM"/>
    <property type="resolution" value="2.60 A"/>
    <property type="chains" value="j=1-103"/>
</dbReference>
<dbReference type="PDB" id="8CD1">
    <property type="method" value="EM"/>
    <property type="resolution" value="3.00 A"/>
    <property type="chains" value="j=1-103"/>
</dbReference>
<dbReference type="PDB" id="8RWG">
    <property type="method" value="EM"/>
    <property type="resolution" value="2.46 A"/>
    <property type="chains" value="i=1-103"/>
</dbReference>
<dbReference type="PDBsum" id="7UNR"/>
<dbReference type="PDBsum" id="7UNU"/>
<dbReference type="PDBsum" id="7UNV"/>
<dbReference type="PDBsum" id="7UNW"/>
<dbReference type="PDBsum" id="8CD1"/>
<dbReference type="PDBsum" id="8RWG"/>
<dbReference type="EMDB" id="EMD-16566"/>
<dbReference type="EMDB" id="EMD-19547"/>
<dbReference type="EMDB" id="EMD-26630"/>
<dbReference type="EMDB" id="EMD-26633"/>
<dbReference type="EMDB" id="EMD-26634"/>
<dbReference type="EMDB" id="EMD-26635"/>
<dbReference type="SMR" id="Q9HWD4"/>
<dbReference type="FunCoup" id="Q9HWD4">
    <property type="interactions" value="897"/>
</dbReference>
<dbReference type="STRING" id="208964.PA4264"/>
<dbReference type="PaxDb" id="208964-PA4264"/>
<dbReference type="DNASU" id="881717"/>
<dbReference type="GeneID" id="77261717"/>
<dbReference type="GeneID" id="881717"/>
<dbReference type="KEGG" id="pae:PA4264"/>
<dbReference type="PATRIC" id="fig|208964.12.peg.4465"/>
<dbReference type="PseudoCAP" id="PA4264"/>
<dbReference type="HOGENOM" id="CLU_122625_1_3_6"/>
<dbReference type="InParanoid" id="Q9HWD4"/>
<dbReference type="OrthoDB" id="9804464at2"/>
<dbReference type="PhylomeDB" id="Q9HWD4"/>
<dbReference type="BioCyc" id="PAER208964:G1FZ6-4337-MONOMER"/>
<dbReference type="PRO" id="PR:Q9HWD4"/>
<dbReference type="Proteomes" id="UP000002438">
    <property type="component" value="Chromosome"/>
</dbReference>
<dbReference type="GO" id="GO:0015935">
    <property type="term" value="C:small ribosomal subunit"/>
    <property type="evidence" value="ECO:0000318"/>
    <property type="project" value="GO_Central"/>
</dbReference>
<dbReference type="GO" id="GO:0003735">
    <property type="term" value="F:structural constituent of ribosome"/>
    <property type="evidence" value="ECO:0000318"/>
    <property type="project" value="GO_Central"/>
</dbReference>
<dbReference type="GO" id="GO:0000049">
    <property type="term" value="F:tRNA binding"/>
    <property type="evidence" value="ECO:0007669"/>
    <property type="project" value="UniProtKB-UniRule"/>
</dbReference>
<dbReference type="GO" id="GO:0006412">
    <property type="term" value="P:translation"/>
    <property type="evidence" value="ECO:0007669"/>
    <property type="project" value="UniProtKB-UniRule"/>
</dbReference>
<dbReference type="FunFam" id="3.30.70.600:FF:000001">
    <property type="entry name" value="30S ribosomal protein S10"/>
    <property type="match status" value="1"/>
</dbReference>
<dbReference type="Gene3D" id="3.30.70.600">
    <property type="entry name" value="Ribosomal protein S10 domain"/>
    <property type="match status" value="1"/>
</dbReference>
<dbReference type="HAMAP" id="MF_00508">
    <property type="entry name" value="Ribosomal_uS10"/>
    <property type="match status" value="1"/>
</dbReference>
<dbReference type="InterPro" id="IPR001848">
    <property type="entry name" value="Ribosomal_uS10"/>
</dbReference>
<dbReference type="InterPro" id="IPR018268">
    <property type="entry name" value="Ribosomal_uS10_CS"/>
</dbReference>
<dbReference type="InterPro" id="IPR027486">
    <property type="entry name" value="Ribosomal_uS10_dom"/>
</dbReference>
<dbReference type="InterPro" id="IPR036838">
    <property type="entry name" value="Ribosomal_uS10_dom_sf"/>
</dbReference>
<dbReference type="NCBIfam" id="NF001861">
    <property type="entry name" value="PRK00596.1"/>
    <property type="match status" value="1"/>
</dbReference>
<dbReference type="NCBIfam" id="TIGR01049">
    <property type="entry name" value="rpsJ_bact"/>
    <property type="match status" value="1"/>
</dbReference>
<dbReference type="PANTHER" id="PTHR11700">
    <property type="entry name" value="30S RIBOSOMAL PROTEIN S10 FAMILY MEMBER"/>
    <property type="match status" value="1"/>
</dbReference>
<dbReference type="Pfam" id="PF00338">
    <property type="entry name" value="Ribosomal_S10"/>
    <property type="match status" value="1"/>
</dbReference>
<dbReference type="PRINTS" id="PR00971">
    <property type="entry name" value="RIBOSOMALS10"/>
</dbReference>
<dbReference type="SMART" id="SM01403">
    <property type="entry name" value="Ribosomal_S10"/>
    <property type="match status" value="1"/>
</dbReference>
<dbReference type="SUPFAM" id="SSF54999">
    <property type="entry name" value="Ribosomal protein S10"/>
    <property type="match status" value="1"/>
</dbReference>
<dbReference type="PROSITE" id="PS00361">
    <property type="entry name" value="RIBOSOMAL_S10"/>
    <property type="match status" value="1"/>
</dbReference>
<gene>
    <name evidence="1" type="primary">rpsJ</name>
    <name type="ordered locus">PA4264</name>
</gene>
<evidence type="ECO:0000255" key="1">
    <source>
        <dbReference type="HAMAP-Rule" id="MF_00508"/>
    </source>
</evidence>
<evidence type="ECO:0000305" key="2"/>
<sequence length="103" mass="11767">MQNQQIRIRLKAFDHRLIDQSTQEIVETAKRTGAQVRGPIPLPTRKERFTVLISPHVNKDARDQYEIRTHKRVLDIVQPTDKTVDALMKLDLAAGVEVQISLG</sequence>
<protein>
    <recommendedName>
        <fullName evidence="1">Small ribosomal subunit protein uS10</fullName>
    </recommendedName>
    <alternativeName>
        <fullName evidence="2">30S ribosomal protein S10</fullName>
    </alternativeName>
</protein>
<organism>
    <name type="scientific">Pseudomonas aeruginosa (strain ATCC 15692 / DSM 22644 / CIP 104116 / JCM 14847 / LMG 12228 / 1C / PRS 101 / PAO1)</name>
    <dbReference type="NCBI Taxonomy" id="208964"/>
    <lineage>
        <taxon>Bacteria</taxon>
        <taxon>Pseudomonadati</taxon>
        <taxon>Pseudomonadota</taxon>
        <taxon>Gammaproteobacteria</taxon>
        <taxon>Pseudomonadales</taxon>
        <taxon>Pseudomonadaceae</taxon>
        <taxon>Pseudomonas</taxon>
    </lineage>
</organism>
<comment type="function">
    <text evidence="1">Involved in the binding of tRNA to the ribosomes.</text>
</comment>
<comment type="subunit">
    <text evidence="1">Part of the 30S ribosomal subunit.</text>
</comment>
<comment type="similarity">
    <text evidence="1">Belongs to the universal ribosomal protein uS10 family.</text>
</comment>